<reference key="1">
    <citation type="journal article" date="2007" name="Curr. Biol.">
        <title>Reduced genome of the thioautotrophic intracellular symbiont in a deep-sea clam, Calyptogena okutanii.</title>
        <authorList>
            <person name="Kuwahara H."/>
            <person name="Yoshida T."/>
            <person name="Takaki Y."/>
            <person name="Shimamura S."/>
            <person name="Nishi S."/>
            <person name="Harada M."/>
            <person name="Matsuyama K."/>
            <person name="Takishita K."/>
            <person name="Kawato M."/>
            <person name="Uematsu K."/>
            <person name="Fujiwara Y."/>
            <person name="Sato T."/>
            <person name="Kato C."/>
            <person name="Kitagawa M."/>
            <person name="Kato I."/>
            <person name="Maruyama T."/>
        </authorList>
    </citation>
    <scope>NUCLEOTIDE SEQUENCE [LARGE SCALE GENOMIC DNA]</scope>
    <source>
        <strain>HA</strain>
    </source>
</reference>
<sequence>MEFKFNKDGSRDFLSKKKIAIIVGYFYQDICDNLLLASQETLTKYGIKANNINVFYAPGAFEIPLLAKKLASQQINGKNLYNGIVALGAVINGETPHFKFICNECARGVSNVSYQYEIPTTFGVITTNNMEQTIARAGGYKGNKGEEATMAMIIMLYLMQQADTQFF</sequence>
<accession>A5CWS3</accession>
<gene>
    <name evidence="1" type="primary">ribH</name>
    <name type="ordered locus">COSY_0464</name>
</gene>
<comment type="function">
    <text evidence="1">Catalyzes the formation of 6,7-dimethyl-8-ribityllumazine by condensation of 5-amino-6-(D-ribitylamino)uracil with 3,4-dihydroxy-2-butanone 4-phosphate. This is the penultimate step in the biosynthesis of riboflavin.</text>
</comment>
<comment type="catalytic activity">
    <reaction evidence="1">
        <text>(2S)-2-hydroxy-3-oxobutyl phosphate + 5-amino-6-(D-ribitylamino)uracil = 6,7-dimethyl-8-(1-D-ribityl)lumazine + phosphate + 2 H2O + H(+)</text>
        <dbReference type="Rhea" id="RHEA:26152"/>
        <dbReference type="ChEBI" id="CHEBI:15377"/>
        <dbReference type="ChEBI" id="CHEBI:15378"/>
        <dbReference type="ChEBI" id="CHEBI:15934"/>
        <dbReference type="ChEBI" id="CHEBI:43474"/>
        <dbReference type="ChEBI" id="CHEBI:58201"/>
        <dbReference type="ChEBI" id="CHEBI:58830"/>
        <dbReference type="EC" id="2.5.1.78"/>
    </reaction>
</comment>
<comment type="pathway">
    <text evidence="1">Cofactor biosynthesis; riboflavin biosynthesis; riboflavin from 2-hydroxy-3-oxobutyl phosphate and 5-amino-6-(D-ribitylamino)uracil: step 1/2.</text>
</comment>
<comment type="subunit">
    <text evidence="1">Forms an icosahedral capsid composed of 60 subunits, arranged as a dodecamer of pentamers.</text>
</comment>
<comment type="similarity">
    <text evidence="1">Belongs to the DMRL synthase family.</text>
</comment>
<dbReference type="EC" id="2.5.1.78" evidence="1"/>
<dbReference type="EMBL" id="AP009247">
    <property type="protein sequence ID" value="BAF61583.1"/>
    <property type="molecule type" value="Genomic_DNA"/>
</dbReference>
<dbReference type="RefSeq" id="WP_011929853.1">
    <property type="nucleotide sequence ID" value="NC_009465.1"/>
</dbReference>
<dbReference type="SMR" id="A5CWS3"/>
<dbReference type="STRING" id="412965.COSY_0464"/>
<dbReference type="KEGG" id="vok:COSY_0464"/>
<dbReference type="eggNOG" id="COG0054">
    <property type="taxonomic scope" value="Bacteria"/>
</dbReference>
<dbReference type="HOGENOM" id="CLU_089358_1_1_6"/>
<dbReference type="OrthoDB" id="9809709at2"/>
<dbReference type="UniPathway" id="UPA00275">
    <property type="reaction ID" value="UER00404"/>
</dbReference>
<dbReference type="Proteomes" id="UP000000247">
    <property type="component" value="Chromosome"/>
</dbReference>
<dbReference type="GO" id="GO:0005829">
    <property type="term" value="C:cytosol"/>
    <property type="evidence" value="ECO:0007669"/>
    <property type="project" value="TreeGrafter"/>
</dbReference>
<dbReference type="GO" id="GO:0009349">
    <property type="term" value="C:riboflavin synthase complex"/>
    <property type="evidence" value="ECO:0007669"/>
    <property type="project" value="InterPro"/>
</dbReference>
<dbReference type="GO" id="GO:0000906">
    <property type="term" value="F:6,7-dimethyl-8-ribityllumazine synthase activity"/>
    <property type="evidence" value="ECO:0007669"/>
    <property type="project" value="UniProtKB-UniRule"/>
</dbReference>
<dbReference type="GO" id="GO:0009231">
    <property type="term" value="P:riboflavin biosynthetic process"/>
    <property type="evidence" value="ECO:0007669"/>
    <property type="project" value="UniProtKB-UniRule"/>
</dbReference>
<dbReference type="CDD" id="cd09209">
    <property type="entry name" value="Lumazine_synthase-I"/>
    <property type="match status" value="1"/>
</dbReference>
<dbReference type="Gene3D" id="3.40.50.960">
    <property type="entry name" value="Lumazine/riboflavin synthase"/>
    <property type="match status" value="1"/>
</dbReference>
<dbReference type="HAMAP" id="MF_00178">
    <property type="entry name" value="Lumazine_synth"/>
    <property type="match status" value="1"/>
</dbReference>
<dbReference type="InterPro" id="IPR034964">
    <property type="entry name" value="LS"/>
</dbReference>
<dbReference type="InterPro" id="IPR002180">
    <property type="entry name" value="LS/RS"/>
</dbReference>
<dbReference type="InterPro" id="IPR036467">
    <property type="entry name" value="LS/RS_sf"/>
</dbReference>
<dbReference type="NCBIfam" id="TIGR00114">
    <property type="entry name" value="lumazine-synth"/>
    <property type="match status" value="1"/>
</dbReference>
<dbReference type="PANTHER" id="PTHR21058:SF0">
    <property type="entry name" value="6,7-DIMETHYL-8-RIBITYLLUMAZINE SYNTHASE"/>
    <property type="match status" value="1"/>
</dbReference>
<dbReference type="PANTHER" id="PTHR21058">
    <property type="entry name" value="6,7-DIMETHYL-8-RIBITYLLUMAZINE SYNTHASE DMRL SYNTHASE LUMAZINE SYNTHASE"/>
    <property type="match status" value="1"/>
</dbReference>
<dbReference type="Pfam" id="PF00885">
    <property type="entry name" value="DMRL_synthase"/>
    <property type="match status" value="1"/>
</dbReference>
<dbReference type="SUPFAM" id="SSF52121">
    <property type="entry name" value="Lumazine synthase"/>
    <property type="match status" value="1"/>
</dbReference>
<keyword id="KW-1185">Reference proteome</keyword>
<keyword id="KW-0686">Riboflavin biosynthesis</keyword>
<keyword id="KW-0808">Transferase</keyword>
<evidence type="ECO:0000255" key="1">
    <source>
        <dbReference type="HAMAP-Rule" id="MF_00178"/>
    </source>
</evidence>
<proteinExistence type="inferred from homology"/>
<protein>
    <recommendedName>
        <fullName evidence="1">6,7-dimethyl-8-ribityllumazine synthase</fullName>
        <shortName evidence="1">DMRL synthase</shortName>
        <shortName evidence="1">LS</shortName>
        <shortName evidence="1">Lumazine synthase</shortName>
        <ecNumber evidence="1">2.5.1.78</ecNumber>
    </recommendedName>
</protein>
<feature type="chain" id="PRO_1000203809" description="6,7-dimethyl-8-ribityllumazine synthase">
    <location>
        <begin position="1"/>
        <end position="167"/>
    </location>
</feature>
<feature type="active site" description="Proton donor" evidence="1">
    <location>
        <position position="97"/>
    </location>
</feature>
<feature type="binding site" evidence="1">
    <location>
        <position position="26"/>
    </location>
    <ligand>
        <name>5-amino-6-(D-ribitylamino)uracil</name>
        <dbReference type="ChEBI" id="CHEBI:15934"/>
    </ligand>
</feature>
<feature type="binding site" evidence="1">
    <location>
        <begin position="60"/>
        <end position="62"/>
    </location>
    <ligand>
        <name>5-amino-6-(D-ribitylamino)uracil</name>
        <dbReference type="ChEBI" id="CHEBI:15934"/>
    </ligand>
</feature>
<feature type="binding site" evidence="1">
    <location>
        <begin position="89"/>
        <end position="91"/>
    </location>
    <ligand>
        <name>5-amino-6-(D-ribitylamino)uracil</name>
        <dbReference type="ChEBI" id="CHEBI:15934"/>
    </ligand>
</feature>
<feature type="binding site" evidence="1">
    <location>
        <begin position="94"/>
        <end position="95"/>
    </location>
    <ligand>
        <name>(2S)-2-hydroxy-3-oxobutyl phosphate</name>
        <dbReference type="ChEBI" id="CHEBI:58830"/>
    </ligand>
</feature>
<feature type="binding site" evidence="1">
    <location>
        <position position="122"/>
    </location>
    <ligand>
        <name>5-amino-6-(D-ribitylamino)uracil</name>
        <dbReference type="ChEBI" id="CHEBI:15934"/>
    </ligand>
</feature>
<feature type="binding site" evidence="1">
    <location>
        <position position="136"/>
    </location>
    <ligand>
        <name>(2S)-2-hydroxy-3-oxobutyl phosphate</name>
        <dbReference type="ChEBI" id="CHEBI:58830"/>
    </ligand>
</feature>
<name>RISB_VESOH</name>
<organism>
    <name type="scientific">Vesicomyosocius okutanii subsp. Calyptogena okutanii (strain HA)</name>
    <dbReference type="NCBI Taxonomy" id="412965"/>
    <lineage>
        <taxon>Bacteria</taxon>
        <taxon>Pseudomonadati</taxon>
        <taxon>Pseudomonadota</taxon>
        <taxon>Gammaproteobacteria</taxon>
        <taxon>Candidatus Pseudothioglobaceae</taxon>
        <taxon>Candidatus Vesicomyosocius</taxon>
    </lineage>
</organism>